<organism>
    <name type="scientific">Neisseria meningitidis serogroup C / serotype 2a (strain ATCC 700532 / DSM 15464 / FAM18)</name>
    <dbReference type="NCBI Taxonomy" id="272831"/>
    <lineage>
        <taxon>Bacteria</taxon>
        <taxon>Pseudomonadati</taxon>
        <taxon>Pseudomonadota</taxon>
        <taxon>Betaproteobacteria</taxon>
        <taxon>Neisseriales</taxon>
        <taxon>Neisseriaceae</taxon>
        <taxon>Neisseria</taxon>
    </lineage>
</organism>
<comment type="catalytic activity">
    <reaction evidence="1">
        <text>tRNA(His) + L-histidine + ATP = L-histidyl-tRNA(His) + AMP + diphosphate + H(+)</text>
        <dbReference type="Rhea" id="RHEA:17313"/>
        <dbReference type="Rhea" id="RHEA-COMP:9665"/>
        <dbReference type="Rhea" id="RHEA-COMP:9689"/>
        <dbReference type="ChEBI" id="CHEBI:15378"/>
        <dbReference type="ChEBI" id="CHEBI:30616"/>
        <dbReference type="ChEBI" id="CHEBI:33019"/>
        <dbReference type="ChEBI" id="CHEBI:57595"/>
        <dbReference type="ChEBI" id="CHEBI:78442"/>
        <dbReference type="ChEBI" id="CHEBI:78527"/>
        <dbReference type="ChEBI" id="CHEBI:456215"/>
        <dbReference type="EC" id="6.1.1.21"/>
    </reaction>
</comment>
<comment type="subunit">
    <text evidence="1">Homodimer.</text>
</comment>
<comment type="subcellular location">
    <subcellularLocation>
        <location evidence="1">Cytoplasm</location>
    </subcellularLocation>
</comment>
<comment type="similarity">
    <text evidence="1">Belongs to the class-II aminoacyl-tRNA synthetase family.</text>
</comment>
<reference key="1">
    <citation type="journal article" date="2007" name="PLoS Genet.">
        <title>Meningococcal genetic variation mechanisms viewed through comparative analysis of serogroup C strain FAM18.</title>
        <authorList>
            <person name="Bentley S.D."/>
            <person name="Vernikos G.S."/>
            <person name="Snyder L.A.S."/>
            <person name="Churcher C."/>
            <person name="Arrowsmith C."/>
            <person name="Chillingworth T."/>
            <person name="Cronin A."/>
            <person name="Davis P.H."/>
            <person name="Holroyd N.E."/>
            <person name="Jagels K."/>
            <person name="Maddison M."/>
            <person name="Moule S."/>
            <person name="Rabbinowitsch E."/>
            <person name="Sharp S."/>
            <person name="Unwin L."/>
            <person name="Whitehead S."/>
            <person name="Quail M.A."/>
            <person name="Achtman M."/>
            <person name="Barrell B.G."/>
            <person name="Saunders N.J."/>
            <person name="Parkhill J."/>
        </authorList>
    </citation>
    <scope>NUCLEOTIDE SEQUENCE [LARGE SCALE GENOMIC DNA]</scope>
    <source>
        <strain>ATCC 700532 / DSM 15464 / FAM18</strain>
    </source>
</reference>
<keyword id="KW-0030">Aminoacyl-tRNA synthetase</keyword>
<keyword id="KW-0067">ATP-binding</keyword>
<keyword id="KW-0963">Cytoplasm</keyword>
<keyword id="KW-0436">Ligase</keyword>
<keyword id="KW-0547">Nucleotide-binding</keyword>
<keyword id="KW-0648">Protein biosynthesis</keyword>
<feature type="chain" id="PRO_1000016401" description="Histidine--tRNA ligase">
    <location>
        <begin position="1"/>
        <end position="431"/>
    </location>
</feature>
<protein>
    <recommendedName>
        <fullName evidence="1">Histidine--tRNA ligase</fullName>
        <ecNumber evidence="1">6.1.1.21</ecNumber>
    </recommendedName>
    <alternativeName>
        <fullName evidence="1">Histidyl-tRNA synthetase</fullName>
        <shortName evidence="1">HisRS</shortName>
    </alternativeName>
</protein>
<sequence length="431" mass="48648">MAQKIQSVKGMNDLLPVEQKDFKLTAAFWQAFEDTVNRWTRAYGYRQIRTPIVEQTGLFVRSIGEETDVVGKEMYTFSDSNDSLSLSLRPEGTASCLRAVVEHNLLYNSPQKLWYMGPMFRRERPQKGRYRQFHQVGIEALGFEGPDIDAEIIAMSADLWEKLGIREYLTLEINSLGNREERAAHRAALVEYLTRYEDKLDEDSKRRLKTNPLRVLDTKNPDLQEICNAAPRLVDYLGEASQNHYARFKAMLDGLGIQYIENPRLVRGLDYYNQTVFEWTTDKLGAQATVCGGGRYDGLIEELGGKPAPSIGFAMGIERLLLLVSEYGSLEVNAAPDVYAMHQGERADLQVMKYAQALRTQGFNVMQHSGYQSLKAQMKKADNSGARFALIVAQDELANGTVTLKDMNGAHGQQTVAAEDLTHTLQQWKNA</sequence>
<name>SYH_NEIMF</name>
<evidence type="ECO:0000255" key="1">
    <source>
        <dbReference type="HAMAP-Rule" id="MF_00127"/>
    </source>
</evidence>
<dbReference type="EC" id="6.1.1.21" evidence="1"/>
<dbReference type="EMBL" id="AM421808">
    <property type="protein sequence ID" value="CAM10078.1"/>
    <property type="molecule type" value="Genomic_DNA"/>
</dbReference>
<dbReference type="RefSeq" id="WP_011798844.1">
    <property type="nucleotide sequence ID" value="NC_008767.1"/>
</dbReference>
<dbReference type="SMR" id="A1KT95"/>
<dbReference type="KEGG" id="nmc:NMC0794"/>
<dbReference type="HOGENOM" id="CLU_025113_1_1_4"/>
<dbReference type="Proteomes" id="UP000002286">
    <property type="component" value="Chromosome"/>
</dbReference>
<dbReference type="GO" id="GO:0005737">
    <property type="term" value="C:cytoplasm"/>
    <property type="evidence" value="ECO:0007669"/>
    <property type="project" value="UniProtKB-SubCell"/>
</dbReference>
<dbReference type="GO" id="GO:0005524">
    <property type="term" value="F:ATP binding"/>
    <property type="evidence" value="ECO:0007669"/>
    <property type="project" value="UniProtKB-UniRule"/>
</dbReference>
<dbReference type="GO" id="GO:0004821">
    <property type="term" value="F:histidine-tRNA ligase activity"/>
    <property type="evidence" value="ECO:0007669"/>
    <property type="project" value="UniProtKB-UniRule"/>
</dbReference>
<dbReference type="GO" id="GO:0006427">
    <property type="term" value="P:histidyl-tRNA aminoacylation"/>
    <property type="evidence" value="ECO:0007669"/>
    <property type="project" value="UniProtKB-UniRule"/>
</dbReference>
<dbReference type="CDD" id="cd00773">
    <property type="entry name" value="HisRS-like_core"/>
    <property type="match status" value="1"/>
</dbReference>
<dbReference type="CDD" id="cd00859">
    <property type="entry name" value="HisRS_anticodon"/>
    <property type="match status" value="1"/>
</dbReference>
<dbReference type="FunFam" id="3.30.930.10:FF:000005">
    <property type="entry name" value="Histidine--tRNA ligase"/>
    <property type="match status" value="1"/>
</dbReference>
<dbReference type="Gene3D" id="3.40.50.800">
    <property type="entry name" value="Anticodon-binding domain"/>
    <property type="match status" value="1"/>
</dbReference>
<dbReference type="Gene3D" id="3.30.930.10">
    <property type="entry name" value="Bira Bifunctional Protein, Domain 2"/>
    <property type="match status" value="1"/>
</dbReference>
<dbReference type="HAMAP" id="MF_00127">
    <property type="entry name" value="His_tRNA_synth"/>
    <property type="match status" value="1"/>
</dbReference>
<dbReference type="InterPro" id="IPR006195">
    <property type="entry name" value="aa-tRNA-synth_II"/>
</dbReference>
<dbReference type="InterPro" id="IPR045864">
    <property type="entry name" value="aa-tRNA-synth_II/BPL/LPL"/>
</dbReference>
<dbReference type="InterPro" id="IPR004154">
    <property type="entry name" value="Anticodon-bd"/>
</dbReference>
<dbReference type="InterPro" id="IPR036621">
    <property type="entry name" value="Anticodon-bd_dom_sf"/>
</dbReference>
<dbReference type="InterPro" id="IPR015807">
    <property type="entry name" value="His-tRNA-ligase"/>
</dbReference>
<dbReference type="InterPro" id="IPR041715">
    <property type="entry name" value="HisRS-like_core"/>
</dbReference>
<dbReference type="InterPro" id="IPR004516">
    <property type="entry name" value="HisRS/HisZ"/>
</dbReference>
<dbReference type="InterPro" id="IPR033656">
    <property type="entry name" value="HisRS_anticodon"/>
</dbReference>
<dbReference type="NCBIfam" id="TIGR00442">
    <property type="entry name" value="hisS"/>
    <property type="match status" value="1"/>
</dbReference>
<dbReference type="PANTHER" id="PTHR43707:SF1">
    <property type="entry name" value="HISTIDINE--TRNA LIGASE, MITOCHONDRIAL-RELATED"/>
    <property type="match status" value="1"/>
</dbReference>
<dbReference type="PANTHER" id="PTHR43707">
    <property type="entry name" value="HISTIDYL-TRNA SYNTHETASE"/>
    <property type="match status" value="1"/>
</dbReference>
<dbReference type="Pfam" id="PF03129">
    <property type="entry name" value="HGTP_anticodon"/>
    <property type="match status" value="1"/>
</dbReference>
<dbReference type="Pfam" id="PF13393">
    <property type="entry name" value="tRNA-synt_His"/>
    <property type="match status" value="1"/>
</dbReference>
<dbReference type="PIRSF" id="PIRSF001549">
    <property type="entry name" value="His-tRNA_synth"/>
    <property type="match status" value="1"/>
</dbReference>
<dbReference type="SUPFAM" id="SSF52954">
    <property type="entry name" value="Class II aaRS ABD-related"/>
    <property type="match status" value="1"/>
</dbReference>
<dbReference type="SUPFAM" id="SSF55681">
    <property type="entry name" value="Class II aaRS and biotin synthetases"/>
    <property type="match status" value="1"/>
</dbReference>
<dbReference type="PROSITE" id="PS50862">
    <property type="entry name" value="AA_TRNA_LIGASE_II"/>
    <property type="match status" value="1"/>
</dbReference>
<proteinExistence type="inferred from homology"/>
<gene>
    <name evidence="1" type="primary">hisS</name>
    <name type="ordered locus">NMC0794</name>
</gene>
<accession>A1KT95</accession>